<evidence type="ECO:0000250" key="1">
    <source>
        <dbReference type="UniProtKB" id="Q02950"/>
    </source>
</evidence>
<evidence type="ECO:0000255" key="2"/>
<evidence type="ECO:0000269" key="3">
    <source>
    </source>
</evidence>
<evidence type="ECO:0000269" key="4">
    <source>
    </source>
</evidence>
<evidence type="ECO:0000305" key="5"/>
<evidence type="ECO:0000305" key="6">
    <source>
    </source>
</evidence>
<reference key="1">
    <citation type="journal article" date="2002" name="Nature">
        <title>The genome sequence of Schizosaccharomyces pombe.</title>
        <authorList>
            <person name="Wood V."/>
            <person name="Gwilliam R."/>
            <person name="Rajandream M.A."/>
            <person name="Lyne M.H."/>
            <person name="Lyne R."/>
            <person name="Stewart A."/>
            <person name="Sgouros J.G."/>
            <person name="Peat N."/>
            <person name="Hayles J."/>
            <person name="Baker S.G."/>
            <person name="Basham D."/>
            <person name="Bowman S."/>
            <person name="Brooks K."/>
            <person name="Brown D."/>
            <person name="Brown S."/>
            <person name="Chillingworth T."/>
            <person name="Churcher C.M."/>
            <person name="Collins M."/>
            <person name="Connor R."/>
            <person name="Cronin A."/>
            <person name="Davis P."/>
            <person name="Feltwell T."/>
            <person name="Fraser A."/>
            <person name="Gentles S."/>
            <person name="Goble A."/>
            <person name="Hamlin N."/>
            <person name="Harris D.E."/>
            <person name="Hidalgo J."/>
            <person name="Hodgson G."/>
            <person name="Holroyd S."/>
            <person name="Hornsby T."/>
            <person name="Howarth S."/>
            <person name="Huckle E.J."/>
            <person name="Hunt S."/>
            <person name="Jagels K."/>
            <person name="James K.D."/>
            <person name="Jones L."/>
            <person name="Jones M."/>
            <person name="Leather S."/>
            <person name="McDonald S."/>
            <person name="McLean J."/>
            <person name="Mooney P."/>
            <person name="Moule S."/>
            <person name="Mungall K.L."/>
            <person name="Murphy L.D."/>
            <person name="Niblett D."/>
            <person name="Odell C."/>
            <person name="Oliver K."/>
            <person name="O'Neil S."/>
            <person name="Pearson D."/>
            <person name="Quail M.A."/>
            <person name="Rabbinowitsch E."/>
            <person name="Rutherford K.M."/>
            <person name="Rutter S."/>
            <person name="Saunders D."/>
            <person name="Seeger K."/>
            <person name="Sharp S."/>
            <person name="Skelton J."/>
            <person name="Simmonds M.N."/>
            <person name="Squares R."/>
            <person name="Squares S."/>
            <person name="Stevens K."/>
            <person name="Taylor K."/>
            <person name="Taylor R.G."/>
            <person name="Tivey A."/>
            <person name="Walsh S.V."/>
            <person name="Warren T."/>
            <person name="Whitehead S."/>
            <person name="Woodward J.R."/>
            <person name="Volckaert G."/>
            <person name="Aert R."/>
            <person name="Robben J."/>
            <person name="Grymonprez B."/>
            <person name="Weltjens I."/>
            <person name="Vanstreels E."/>
            <person name="Rieger M."/>
            <person name="Schaefer M."/>
            <person name="Mueller-Auer S."/>
            <person name="Gabel C."/>
            <person name="Fuchs M."/>
            <person name="Duesterhoeft A."/>
            <person name="Fritzc C."/>
            <person name="Holzer E."/>
            <person name="Moestl D."/>
            <person name="Hilbert H."/>
            <person name="Borzym K."/>
            <person name="Langer I."/>
            <person name="Beck A."/>
            <person name="Lehrach H."/>
            <person name="Reinhardt R."/>
            <person name="Pohl T.M."/>
            <person name="Eger P."/>
            <person name="Zimmermann W."/>
            <person name="Wedler H."/>
            <person name="Wambutt R."/>
            <person name="Purnelle B."/>
            <person name="Goffeau A."/>
            <person name="Cadieu E."/>
            <person name="Dreano S."/>
            <person name="Gloux S."/>
            <person name="Lelaure V."/>
            <person name="Mottier S."/>
            <person name="Galibert F."/>
            <person name="Aves S.J."/>
            <person name="Xiang Z."/>
            <person name="Hunt C."/>
            <person name="Moore K."/>
            <person name="Hurst S.M."/>
            <person name="Lucas M."/>
            <person name="Rochet M."/>
            <person name="Gaillardin C."/>
            <person name="Tallada V.A."/>
            <person name="Garzon A."/>
            <person name="Thode G."/>
            <person name="Daga R.R."/>
            <person name="Cruzado L."/>
            <person name="Jimenez J."/>
            <person name="Sanchez M."/>
            <person name="del Rey F."/>
            <person name="Benito J."/>
            <person name="Dominguez A."/>
            <person name="Revuelta J.L."/>
            <person name="Moreno S."/>
            <person name="Armstrong J."/>
            <person name="Forsburg S.L."/>
            <person name="Cerutti L."/>
            <person name="Lowe T."/>
            <person name="McCombie W.R."/>
            <person name="Paulsen I."/>
            <person name="Potashkin J."/>
            <person name="Shpakovski G.V."/>
            <person name="Ussery D."/>
            <person name="Barrell B.G."/>
            <person name="Nurse P."/>
        </authorList>
    </citation>
    <scope>NUCLEOTIDE SEQUENCE [LARGE SCALE GENOMIC DNA]</scope>
    <source>
        <strain>972 / ATCC 24843</strain>
    </source>
</reference>
<reference key="2">
    <citation type="journal article" date="2011" name="Science">
        <title>Comparative functional genomics of the fission yeasts.</title>
        <authorList>
            <person name="Rhind N."/>
            <person name="Chen Z."/>
            <person name="Yassour M."/>
            <person name="Thompson D.A."/>
            <person name="Haas B.J."/>
            <person name="Habib N."/>
            <person name="Wapinski I."/>
            <person name="Roy S."/>
            <person name="Lin M.F."/>
            <person name="Heiman D.I."/>
            <person name="Young S.K."/>
            <person name="Furuya K."/>
            <person name="Guo Y."/>
            <person name="Pidoux A."/>
            <person name="Chen H.M."/>
            <person name="Robbertse B."/>
            <person name="Goldberg J.M."/>
            <person name="Aoki K."/>
            <person name="Bayne E.H."/>
            <person name="Berlin A.M."/>
            <person name="Desjardins C.A."/>
            <person name="Dobbs E."/>
            <person name="Dukaj L."/>
            <person name="Fan L."/>
            <person name="FitzGerald M.G."/>
            <person name="French C."/>
            <person name="Gujja S."/>
            <person name="Hansen K."/>
            <person name="Keifenheim D."/>
            <person name="Levin J.Z."/>
            <person name="Mosher R.A."/>
            <person name="Mueller C.A."/>
            <person name="Pfiffner J."/>
            <person name="Priest M."/>
            <person name="Russ C."/>
            <person name="Smialowska A."/>
            <person name="Swoboda P."/>
            <person name="Sykes S.M."/>
            <person name="Vaughn M."/>
            <person name="Vengrova S."/>
            <person name="Yoder R."/>
            <person name="Zeng Q."/>
            <person name="Allshire R."/>
            <person name="Baulcombe D."/>
            <person name="Birren B.W."/>
            <person name="Brown W."/>
            <person name="Ekwall K."/>
            <person name="Kellis M."/>
            <person name="Leatherwood J."/>
            <person name="Levin H."/>
            <person name="Margalit H."/>
            <person name="Martienssen R."/>
            <person name="Nieduszynski C.A."/>
            <person name="Spatafora J.W."/>
            <person name="Friedman N."/>
            <person name="Dalgaard J.Z."/>
            <person name="Baumann P."/>
            <person name="Niki H."/>
            <person name="Regev A."/>
            <person name="Nusbaum C."/>
        </authorList>
    </citation>
    <scope>REVISION OF GENE MODEL</scope>
</reference>
<reference key="3">
    <citation type="journal article" date="2006" name="Nat. Biotechnol.">
        <title>ORFeome cloning and global analysis of protein localization in the fission yeast Schizosaccharomyces pombe.</title>
        <authorList>
            <person name="Matsuyama A."/>
            <person name="Arai R."/>
            <person name="Yashiroda Y."/>
            <person name="Shirai A."/>
            <person name="Kamata A."/>
            <person name="Sekido S."/>
            <person name="Kobayashi Y."/>
            <person name="Hashimoto A."/>
            <person name="Hamamoto M."/>
            <person name="Hiraoka Y."/>
            <person name="Horinouchi S."/>
            <person name="Yoshida M."/>
        </authorList>
    </citation>
    <scope>SUBCELLULAR LOCATION [LARGE SCALE ANALYSIS]</scope>
</reference>
<reference key="4">
    <citation type="journal article" date="2021" name="Nucleic Acids Res.">
        <title>Translational activators and mitoribosomal isoforms cooperate to mediate mRNA-specific translation in Schizosaccharomyces pombe mitochondria.</title>
        <authorList>
            <person name="Herbert C.J."/>
            <person name="Labarre-Mariotte S."/>
            <person name="Cornu D."/>
            <person name="Sophie C."/>
            <person name="Panozzo C."/>
            <person name="Michel T."/>
            <person name="Dujardin G."/>
            <person name="Bonnefoy N."/>
        </authorList>
    </citation>
    <scope>FUNCTION</scope>
    <scope>SUBUNIT</scope>
    <scope>SUBCELLULAR LOCATION</scope>
    <scope>INDUCTION</scope>
    <scope>DISRUPTION PHENOTYPE</scope>
    <scope>CLEAVAGE OF INITIATOR METHIONINE</scope>
    <scope>ACETYLATION AT SER-2</scope>
    <scope>MUTAGENESIS OF GLU-21</scope>
</reference>
<feature type="initiator methionine" description="Removed" evidence="4">
    <location>
        <position position="1"/>
    </location>
</feature>
<feature type="transit peptide" description="Mitochondrion; not cleaved" evidence="2 6">
    <location>
        <begin position="2"/>
        <end position="13"/>
    </location>
</feature>
<feature type="chain" id="PRO_0000116742" description="Small ribosomal subunit protein bS1m">
    <location>
        <begin position="14"/>
        <end position="303"/>
    </location>
</feature>
<feature type="modified residue" description="N-acetylserine" evidence="4">
    <location>
        <position position="2"/>
    </location>
</feature>
<feature type="mutagenesis site" description="Creates an N-terminal cleavage site that is partially processed." evidence="4">
    <original>E</original>
    <variation>K</variation>
    <location>
        <position position="21"/>
    </location>
</feature>
<protein>
    <recommendedName>
        <fullName evidence="5">Small ribosomal subunit protein bS1m</fullName>
    </recommendedName>
    <alternativeName>
        <fullName>37S ribosomal protein mrp51, mitochondrial</fullName>
    </alternativeName>
</protein>
<organism>
    <name type="scientific">Schizosaccharomyces pombe (strain 972 / ATCC 24843)</name>
    <name type="common">Fission yeast</name>
    <dbReference type="NCBI Taxonomy" id="284812"/>
    <lineage>
        <taxon>Eukaryota</taxon>
        <taxon>Fungi</taxon>
        <taxon>Dikarya</taxon>
        <taxon>Ascomycota</taxon>
        <taxon>Taphrinomycotina</taxon>
        <taxon>Schizosaccharomycetes</taxon>
        <taxon>Schizosaccharomycetales</taxon>
        <taxon>Schizosaccharomycetaceae</taxon>
        <taxon>Schizosaccharomyces</taxon>
    </lineage>
</organism>
<name>RT51_SCHPO</name>
<accession>O42855</accession>
<comment type="function">
    <text evidence="1 4">Component of the mitochondrial ribosome (mitoribosome), a dedicated translation machinery responsible for the synthesis of mitochondrial genome-encoded proteins, including at least some of the essential transmembrane subunits of the mitochondrial respiratory chain. The mitoribosomes are attached to the mitochondrial inner membrane and translation products are cotranslationally integrated into the membrane. bS1m functionally interacts with the 5'-UTR of mitochondrial mRNAs (By similarity). Plays an essential role in mitochondrial translation (PubMed:34634819).</text>
</comment>
<comment type="subunit">
    <text evidence="1 4">Component of the mitochondrial small ribosomal subunit (mt-SSU) (PubMed:34634819). Mature yeast 74S mitochondrial ribosomes consist of a small (37S) and a large (54S) subunit. The 37S small subunit contains a 15S ribosomal RNA (15S mt-rRNA) and at least 32 different proteins. The 54S large subunit contains a 21S rRNA (21S mt-rRNA) and at least 45 different proteins (By similarity). This subunit is mutually exclusive with mug178/small ribosomal subunit protein L51-b (PubMed:34634819).</text>
</comment>
<comment type="subcellular location">
    <subcellularLocation>
        <location evidence="3 4">Mitochondrion</location>
    </subcellularLocation>
</comment>
<comment type="induction">
    <text evidence="4">More highly expressed in the fermentable carbon source glucose compared to the non-fermentable carbon sources galactose or glycerol.</text>
</comment>
<comment type="disruption phenotype">
    <text evidence="4">Inviable.</text>
</comment>
<comment type="similarity">
    <text evidence="5">Belongs to the bacterial ribosomal protein bS1 family.</text>
</comment>
<sequence length="303" mass="34435">MSFAQILRGSRAMASPKCLPESNYSTSHLRFPRLQSITSKKNSRARGDWGLKRTLPKIKTRYICVRQQDSLYKQADFQSSAKFVRLVRNWFDAGFVRDPSEVALLQELLKETGLKDTRDINKVFSPSKQSDENDNFRRYGVSGGIQYSNVPLINSRVTPNCESNCSNIRRRLTAHIISSDASTAYYGLGGLILRLPRTVVFNRNRSSPLFSQEQRISYTVYKNGRLRLVPFSGPELETHLAYPSEDSEVESFFNRDIQLVAKRDSSLDAPVSYQRGIMKFFMAPSQTSNNEANSSEKDNLSNS</sequence>
<gene>
    <name type="primary">mrp51</name>
    <name type="ORF">SPAC23A1.18c</name>
</gene>
<dbReference type="EMBL" id="CU329670">
    <property type="protein sequence ID" value="CAA16992.2"/>
    <property type="molecule type" value="Genomic_DNA"/>
</dbReference>
<dbReference type="PIR" id="T38237">
    <property type="entry name" value="T38237"/>
</dbReference>
<dbReference type="RefSeq" id="NP_594447.2">
    <property type="nucleotide sequence ID" value="NM_001019876.2"/>
</dbReference>
<dbReference type="BioGRID" id="278519">
    <property type="interactions" value="1"/>
</dbReference>
<dbReference type="ComplexPortal" id="CPX-10315">
    <property type="entry name" value="37S mitochondrial small ribosomal subunit"/>
</dbReference>
<dbReference type="FunCoup" id="O42855">
    <property type="interactions" value="45"/>
</dbReference>
<dbReference type="STRING" id="284812.O42855"/>
<dbReference type="PaxDb" id="4896-SPAC23A1.18c.1"/>
<dbReference type="EnsemblFungi" id="SPAC23A1.18c.1">
    <property type="protein sequence ID" value="SPAC23A1.18c.1:pep"/>
    <property type="gene ID" value="SPAC23A1.18c"/>
</dbReference>
<dbReference type="GeneID" id="2542037"/>
<dbReference type="KEGG" id="spo:2542037"/>
<dbReference type="PomBase" id="SPAC23A1.18c">
    <property type="gene designation" value="mrp51"/>
</dbReference>
<dbReference type="VEuPathDB" id="FungiDB:SPAC23A1.18c"/>
<dbReference type="eggNOG" id="ENOG502SBK0">
    <property type="taxonomic scope" value="Eukaryota"/>
</dbReference>
<dbReference type="HOGENOM" id="CLU_973729_0_0_1"/>
<dbReference type="InParanoid" id="O42855"/>
<dbReference type="OMA" id="GCKRNLP"/>
<dbReference type="PRO" id="PR:O42855"/>
<dbReference type="Proteomes" id="UP000002485">
    <property type="component" value="Chromosome I"/>
</dbReference>
<dbReference type="GO" id="GO:0005763">
    <property type="term" value="C:mitochondrial small ribosomal subunit"/>
    <property type="evidence" value="ECO:0000318"/>
    <property type="project" value="GO_Central"/>
</dbReference>
<dbReference type="GO" id="GO:0005739">
    <property type="term" value="C:mitochondrion"/>
    <property type="evidence" value="ECO:0007005"/>
    <property type="project" value="PomBase"/>
</dbReference>
<dbReference type="GO" id="GO:0003735">
    <property type="term" value="F:structural constituent of ribosome"/>
    <property type="evidence" value="ECO:0000318"/>
    <property type="project" value="GO_Central"/>
</dbReference>
<dbReference type="GO" id="GO:0070124">
    <property type="term" value="P:mitochondrial translational initiation"/>
    <property type="evidence" value="ECO:0000315"/>
    <property type="project" value="UniProtKB"/>
</dbReference>
<dbReference type="InterPro" id="IPR016712">
    <property type="entry name" value="Rbsml_bS1m-like"/>
</dbReference>
<dbReference type="PANTHER" id="PTHR28058">
    <property type="entry name" value="37S RIBOSOMAL PROTEIN MRP51, MITOCHONDRIAL"/>
    <property type="match status" value="1"/>
</dbReference>
<dbReference type="PANTHER" id="PTHR28058:SF1">
    <property type="entry name" value="SMALL RIBOSOMAL SUBUNIT PROTEIN BS1M"/>
    <property type="match status" value="1"/>
</dbReference>
<dbReference type="Pfam" id="PF11709">
    <property type="entry name" value="Mit_ribos_Mrp51"/>
    <property type="match status" value="1"/>
</dbReference>
<keyword id="KW-0007">Acetylation</keyword>
<keyword id="KW-0496">Mitochondrion</keyword>
<keyword id="KW-1185">Reference proteome</keyword>
<keyword id="KW-0687">Ribonucleoprotein</keyword>
<keyword id="KW-0689">Ribosomal protein</keyword>
<keyword id="KW-0809">Transit peptide</keyword>
<proteinExistence type="evidence at protein level"/>